<organism>
    <name type="scientific">Xanthomonas campestris pv. campestris (strain B100)</name>
    <dbReference type="NCBI Taxonomy" id="509169"/>
    <lineage>
        <taxon>Bacteria</taxon>
        <taxon>Pseudomonadati</taxon>
        <taxon>Pseudomonadota</taxon>
        <taxon>Gammaproteobacteria</taxon>
        <taxon>Lysobacterales</taxon>
        <taxon>Lysobacteraceae</taxon>
        <taxon>Xanthomonas</taxon>
    </lineage>
</organism>
<sequence>MTMEAKAILRTARISPQKARLVADQVRGLSAERAVNLLKFSDKKAAHLIKKVVESAIANAENNQGADVDELKVKTIMVDEGPSLKRFMARAKGRGTRILKRTSHITVVVGAAK</sequence>
<reference key="1">
    <citation type="journal article" date="2008" name="J. Biotechnol.">
        <title>The genome of Xanthomonas campestris pv. campestris B100 and its use for the reconstruction of metabolic pathways involved in xanthan biosynthesis.</title>
        <authorList>
            <person name="Vorhoelter F.-J."/>
            <person name="Schneiker S."/>
            <person name="Goesmann A."/>
            <person name="Krause L."/>
            <person name="Bekel T."/>
            <person name="Kaiser O."/>
            <person name="Linke B."/>
            <person name="Patschkowski T."/>
            <person name="Rueckert C."/>
            <person name="Schmid J."/>
            <person name="Sidhu V.K."/>
            <person name="Sieber V."/>
            <person name="Tauch A."/>
            <person name="Watt S.A."/>
            <person name="Weisshaar B."/>
            <person name="Becker A."/>
            <person name="Niehaus K."/>
            <person name="Puehler A."/>
        </authorList>
    </citation>
    <scope>NUCLEOTIDE SEQUENCE [LARGE SCALE GENOMIC DNA]</scope>
    <source>
        <strain>B100</strain>
    </source>
</reference>
<keyword id="KW-0687">Ribonucleoprotein</keyword>
<keyword id="KW-0689">Ribosomal protein</keyword>
<keyword id="KW-0694">RNA-binding</keyword>
<keyword id="KW-0699">rRNA-binding</keyword>
<feature type="chain" id="PRO_1000142327" description="Large ribosomal subunit protein uL22">
    <location>
        <begin position="1"/>
        <end position="113"/>
    </location>
</feature>
<accession>B0RU77</accession>
<name>RL22_XANCB</name>
<comment type="function">
    <text evidence="1">This protein binds specifically to 23S rRNA; its binding is stimulated by other ribosomal proteins, e.g. L4, L17, and L20. It is important during the early stages of 50S assembly. It makes multiple contacts with different domains of the 23S rRNA in the assembled 50S subunit and ribosome (By similarity).</text>
</comment>
<comment type="function">
    <text evidence="1">The globular domain of the protein is located near the polypeptide exit tunnel on the outside of the subunit, while an extended beta-hairpin is found that lines the wall of the exit tunnel in the center of the 70S ribosome.</text>
</comment>
<comment type="subunit">
    <text evidence="1">Part of the 50S ribosomal subunit.</text>
</comment>
<comment type="similarity">
    <text evidence="1">Belongs to the universal ribosomal protein uL22 family.</text>
</comment>
<protein>
    <recommendedName>
        <fullName evidence="1">Large ribosomal subunit protein uL22</fullName>
    </recommendedName>
    <alternativeName>
        <fullName evidence="2">50S ribosomal protein L22</fullName>
    </alternativeName>
</protein>
<gene>
    <name evidence="1" type="primary">rplV</name>
    <name type="ordered locus">xcc-b100_3454</name>
</gene>
<evidence type="ECO:0000255" key="1">
    <source>
        <dbReference type="HAMAP-Rule" id="MF_01331"/>
    </source>
</evidence>
<evidence type="ECO:0000305" key="2"/>
<proteinExistence type="inferred from homology"/>
<dbReference type="EMBL" id="AM920689">
    <property type="protein sequence ID" value="CAP52819.1"/>
    <property type="molecule type" value="Genomic_DNA"/>
</dbReference>
<dbReference type="SMR" id="B0RU77"/>
<dbReference type="KEGG" id="xca:xcc-b100_3454"/>
<dbReference type="HOGENOM" id="CLU_083987_3_3_6"/>
<dbReference type="Proteomes" id="UP000001188">
    <property type="component" value="Chromosome"/>
</dbReference>
<dbReference type="GO" id="GO:0022625">
    <property type="term" value="C:cytosolic large ribosomal subunit"/>
    <property type="evidence" value="ECO:0007669"/>
    <property type="project" value="TreeGrafter"/>
</dbReference>
<dbReference type="GO" id="GO:0019843">
    <property type="term" value="F:rRNA binding"/>
    <property type="evidence" value="ECO:0007669"/>
    <property type="project" value="UniProtKB-UniRule"/>
</dbReference>
<dbReference type="GO" id="GO:0003735">
    <property type="term" value="F:structural constituent of ribosome"/>
    <property type="evidence" value="ECO:0007669"/>
    <property type="project" value="InterPro"/>
</dbReference>
<dbReference type="GO" id="GO:0006412">
    <property type="term" value="P:translation"/>
    <property type="evidence" value="ECO:0007669"/>
    <property type="project" value="UniProtKB-UniRule"/>
</dbReference>
<dbReference type="CDD" id="cd00336">
    <property type="entry name" value="Ribosomal_L22"/>
    <property type="match status" value="1"/>
</dbReference>
<dbReference type="FunFam" id="3.90.470.10:FF:000001">
    <property type="entry name" value="50S ribosomal protein L22"/>
    <property type="match status" value="1"/>
</dbReference>
<dbReference type="Gene3D" id="3.90.470.10">
    <property type="entry name" value="Ribosomal protein L22/L17"/>
    <property type="match status" value="1"/>
</dbReference>
<dbReference type="HAMAP" id="MF_01331_B">
    <property type="entry name" value="Ribosomal_uL22_B"/>
    <property type="match status" value="1"/>
</dbReference>
<dbReference type="InterPro" id="IPR001063">
    <property type="entry name" value="Ribosomal_uL22"/>
</dbReference>
<dbReference type="InterPro" id="IPR005727">
    <property type="entry name" value="Ribosomal_uL22_bac/chlpt-type"/>
</dbReference>
<dbReference type="InterPro" id="IPR047867">
    <property type="entry name" value="Ribosomal_uL22_bac/org-type"/>
</dbReference>
<dbReference type="InterPro" id="IPR018260">
    <property type="entry name" value="Ribosomal_uL22_CS"/>
</dbReference>
<dbReference type="InterPro" id="IPR036394">
    <property type="entry name" value="Ribosomal_uL22_sf"/>
</dbReference>
<dbReference type="NCBIfam" id="TIGR01044">
    <property type="entry name" value="rplV_bact"/>
    <property type="match status" value="1"/>
</dbReference>
<dbReference type="PANTHER" id="PTHR13501">
    <property type="entry name" value="CHLOROPLAST 50S RIBOSOMAL PROTEIN L22-RELATED"/>
    <property type="match status" value="1"/>
</dbReference>
<dbReference type="PANTHER" id="PTHR13501:SF8">
    <property type="entry name" value="LARGE RIBOSOMAL SUBUNIT PROTEIN UL22M"/>
    <property type="match status" value="1"/>
</dbReference>
<dbReference type="Pfam" id="PF00237">
    <property type="entry name" value="Ribosomal_L22"/>
    <property type="match status" value="1"/>
</dbReference>
<dbReference type="SUPFAM" id="SSF54843">
    <property type="entry name" value="Ribosomal protein L22"/>
    <property type="match status" value="1"/>
</dbReference>
<dbReference type="PROSITE" id="PS00464">
    <property type="entry name" value="RIBOSOMAL_L22"/>
    <property type="match status" value="1"/>
</dbReference>